<organism>
    <name type="scientific">Alkalilimnicola ehrlichii (strain ATCC BAA-1101 / DSM 17681 / MLHE-1)</name>
    <dbReference type="NCBI Taxonomy" id="187272"/>
    <lineage>
        <taxon>Bacteria</taxon>
        <taxon>Pseudomonadati</taxon>
        <taxon>Pseudomonadota</taxon>
        <taxon>Gammaproteobacteria</taxon>
        <taxon>Chromatiales</taxon>
        <taxon>Ectothiorhodospiraceae</taxon>
        <taxon>Alkalilimnicola</taxon>
    </lineage>
</organism>
<name>RS17_ALKEH</name>
<evidence type="ECO:0000255" key="1">
    <source>
        <dbReference type="HAMAP-Rule" id="MF_01345"/>
    </source>
</evidence>
<evidence type="ECO:0000305" key="2"/>
<proteinExistence type="inferred from homology"/>
<sequence length="87" mass="10021">MTENEKVTRNVQGRVVSNKADKTITVLVERRVRHPLYGKYIRRSSKMQAHDEGNECQVGDVVTIEQCRPISKSKAWRLVKVLERAAQ</sequence>
<gene>
    <name evidence="1" type="primary">rpsQ</name>
    <name type="ordered locus">Mlg_0467</name>
</gene>
<accession>Q0ABG6</accession>
<comment type="function">
    <text evidence="1">One of the primary rRNA binding proteins, it binds specifically to the 5'-end of 16S ribosomal RNA.</text>
</comment>
<comment type="subunit">
    <text evidence="1">Part of the 30S ribosomal subunit.</text>
</comment>
<comment type="similarity">
    <text evidence="1">Belongs to the universal ribosomal protein uS17 family.</text>
</comment>
<protein>
    <recommendedName>
        <fullName evidence="1">Small ribosomal subunit protein uS17</fullName>
    </recommendedName>
    <alternativeName>
        <fullName evidence="2">30S ribosomal protein S17</fullName>
    </alternativeName>
</protein>
<dbReference type="EMBL" id="CP000453">
    <property type="protein sequence ID" value="ABI55821.1"/>
    <property type="molecule type" value="Genomic_DNA"/>
</dbReference>
<dbReference type="RefSeq" id="WP_011628216.1">
    <property type="nucleotide sequence ID" value="NC_008340.1"/>
</dbReference>
<dbReference type="SMR" id="Q0ABG6"/>
<dbReference type="KEGG" id="aeh:Mlg_0467"/>
<dbReference type="eggNOG" id="COG0186">
    <property type="taxonomic scope" value="Bacteria"/>
</dbReference>
<dbReference type="HOGENOM" id="CLU_073626_1_1_6"/>
<dbReference type="OrthoDB" id="9811714at2"/>
<dbReference type="Proteomes" id="UP000001962">
    <property type="component" value="Chromosome"/>
</dbReference>
<dbReference type="GO" id="GO:0022627">
    <property type="term" value="C:cytosolic small ribosomal subunit"/>
    <property type="evidence" value="ECO:0007669"/>
    <property type="project" value="TreeGrafter"/>
</dbReference>
<dbReference type="GO" id="GO:0019843">
    <property type="term" value="F:rRNA binding"/>
    <property type="evidence" value="ECO:0007669"/>
    <property type="project" value="UniProtKB-UniRule"/>
</dbReference>
<dbReference type="GO" id="GO:0003735">
    <property type="term" value="F:structural constituent of ribosome"/>
    <property type="evidence" value="ECO:0007669"/>
    <property type="project" value="InterPro"/>
</dbReference>
<dbReference type="GO" id="GO:0006412">
    <property type="term" value="P:translation"/>
    <property type="evidence" value="ECO:0007669"/>
    <property type="project" value="UniProtKB-UniRule"/>
</dbReference>
<dbReference type="CDD" id="cd00364">
    <property type="entry name" value="Ribosomal_uS17"/>
    <property type="match status" value="1"/>
</dbReference>
<dbReference type="Gene3D" id="2.40.50.140">
    <property type="entry name" value="Nucleic acid-binding proteins"/>
    <property type="match status" value="1"/>
</dbReference>
<dbReference type="HAMAP" id="MF_01345_B">
    <property type="entry name" value="Ribosomal_uS17_B"/>
    <property type="match status" value="1"/>
</dbReference>
<dbReference type="InterPro" id="IPR012340">
    <property type="entry name" value="NA-bd_OB-fold"/>
</dbReference>
<dbReference type="InterPro" id="IPR000266">
    <property type="entry name" value="Ribosomal_uS17"/>
</dbReference>
<dbReference type="InterPro" id="IPR019984">
    <property type="entry name" value="Ribosomal_uS17_bact/chlr"/>
</dbReference>
<dbReference type="InterPro" id="IPR019979">
    <property type="entry name" value="Ribosomal_uS17_CS"/>
</dbReference>
<dbReference type="NCBIfam" id="NF004123">
    <property type="entry name" value="PRK05610.1"/>
    <property type="match status" value="1"/>
</dbReference>
<dbReference type="NCBIfam" id="TIGR03635">
    <property type="entry name" value="uS17_bact"/>
    <property type="match status" value="1"/>
</dbReference>
<dbReference type="PANTHER" id="PTHR10744">
    <property type="entry name" value="40S RIBOSOMAL PROTEIN S11 FAMILY MEMBER"/>
    <property type="match status" value="1"/>
</dbReference>
<dbReference type="PANTHER" id="PTHR10744:SF1">
    <property type="entry name" value="SMALL RIBOSOMAL SUBUNIT PROTEIN US17M"/>
    <property type="match status" value="1"/>
</dbReference>
<dbReference type="Pfam" id="PF00366">
    <property type="entry name" value="Ribosomal_S17"/>
    <property type="match status" value="1"/>
</dbReference>
<dbReference type="PRINTS" id="PR00973">
    <property type="entry name" value="RIBOSOMALS17"/>
</dbReference>
<dbReference type="SUPFAM" id="SSF50249">
    <property type="entry name" value="Nucleic acid-binding proteins"/>
    <property type="match status" value="1"/>
</dbReference>
<dbReference type="PROSITE" id="PS00056">
    <property type="entry name" value="RIBOSOMAL_S17"/>
    <property type="match status" value="1"/>
</dbReference>
<keyword id="KW-1185">Reference proteome</keyword>
<keyword id="KW-0687">Ribonucleoprotein</keyword>
<keyword id="KW-0689">Ribosomal protein</keyword>
<keyword id="KW-0694">RNA-binding</keyword>
<keyword id="KW-0699">rRNA-binding</keyword>
<feature type="chain" id="PRO_1000054912" description="Small ribosomal subunit protein uS17">
    <location>
        <begin position="1"/>
        <end position="87"/>
    </location>
</feature>
<reference key="1">
    <citation type="submission" date="2006-08" db="EMBL/GenBank/DDBJ databases">
        <title>Complete sequence of Alkalilimnicola ehrilichei MLHE-1.</title>
        <authorList>
            <person name="Copeland A."/>
            <person name="Lucas S."/>
            <person name="Lapidus A."/>
            <person name="Barry K."/>
            <person name="Detter J.C."/>
            <person name="Glavina del Rio T."/>
            <person name="Hammon N."/>
            <person name="Israni S."/>
            <person name="Dalin E."/>
            <person name="Tice H."/>
            <person name="Pitluck S."/>
            <person name="Sims D."/>
            <person name="Brettin T."/>
            <person name="Bruce D."/>
            <person name="Han C."/>
            <person name="Tapia R."/>
            <person name="Gilna P."/>
            <person name="Schmutz J."/>
            <person name="Larimer F."/>
            <person name="Land M."/>
            <person name="Hauser L."/>
            <person name="Kyrpides N."/>
            <person name="Mikhailova N."/>
            <person name="Oremland R.S."/>
            <person name="Hoeft S.E."/>
            <person name="Switzer-Blum J."/>
            <person name="Kulp T."/>
            <person name="King G."/>
            <person name="Tabita R."/>
            <person name="Witte B."/>
            <person name="Santini J.M."/>
            <person name="Basu P."/>
            <person name="Hollibaugh J.T."/>
            <person name="Xie G."/>
            <person name="Stolz J.F."/>
            <person name="Richardson P."/>
        </authorList>
    </citation>
    <scope>NUCLEOTIDE SEQUENCE [LARGE SCALE GENOMIC DNA]</scope>
    <source>
        <strain>ATCC BAA-1101 / DSM 17681 / MLHE-1</strain>
    </source>
</reference>